<protein>
    <recommendedName>
        <fullName evidence="1">RNA-directed RNA polymerase catalytic subunit</fullName>
        <ecNumber evidence="1">2.7.7.48</ecNumber>
    </recommendedName>
    <alternativeName>
        <fullName evidence="1">Polymerase basic protein 1</fullName>
        <shortName evidence="1">PB1</shortName>
    </alternativeName>
    <alternativeName>
        <fullName evidence="1">RNA-directed RNA polymerase subunit P1</fullName>
    </alternativeName>
</protein>
<dbReference type="EC" id="2.7.7.48" evidence="1"/>
<dbReference type="EMBL" id="M20169">
    <property type="protein sequence ID" value="AAA43769.1"/>
    <property type="status" value="ALT_SEQ"/>
    <property type="molecule type" value="Genomic_RNA"/>
</dbReference>
<dbReference type="PIR" id="C28604">
    <property type="entry name" value="P1IVBC"/>
</dbReference>
<dbReference type="SMR" id="P13871"/>
<dbReference type="GO" id="GO:0030430">
    <property type="term" value="C:host cell cytoplasm"/>
    <property type="evidence" value="ECO:0007669"/>
    <property type="project" value="UniProtKB-SubCell"/>
</dbReference>
<dbReference type="GO" id="GO:0042025">
    <property type="term" value="C:host cell nucleus"/>
    <property type="evidence" value="ECO:0007669"/>
    <property type="project" value="UniProtKB-SubCell"/>
</dbReference>
<dbReference type="GO" id="GO:0000166">
    <property type="term" value="F:nucleotide binding"/>
    <property type="evidence" value="ECO:0007669"/>
    <property type="project" value="UniProtKB-UniRule"/>
</dbReference>
<dbReference type="GO" id="GO:0003723">
    <property type="term" value="F:RNA binding"/>
    <property type="evidence" value="ECO:0007669"/>
    <property type="project" value="InterPro"/>
</dbReference>
<dbReference type="GO" id="GO:0003968">
    <property type="term" value="F:RNA-directed RNA polymerase activity"/>
    <property type="evidence" value="ECO:0007669"/>
    <property type="project" value="UniProtKB-UniRule"/>
</dbReference>
<dbReference type="GO" id="GO:0006351">
    <property type="term" value="P:DNA-templated transcription"/>
    <property type="evidence" value="ECO:0007669"/>
    <property type="project" value="UniProtKB-UniRule"/>
</dbReference>
<dbReference type="GO" id="GO:0039657">
    <property type="term" value="P:symbiont-mediated suppression of host gene expression"/>
    <property type="evidence" value="ECO:0007669"/>
    <property type="project" value="UniProtKB-KW"/>
</dbReference>
<dbReference type="GO" id="GO:0039523">
    <property type="term" value="P:symbiont-mediated suppression of host mRNA transcription via inhibition of RNA polymerase II activity"/>
    <property type="evidence" value="ECO:0007669"/>
    <property type="project" value="UniProtKB-UniRule"/>
</dbReference>
<dbReference type="GO" id="GO:0039694">
    <property type="term" value="P:viral RNA genome replication"/>
    <property type="evidence" value="ECO:0007669"/>
    <property type="project" value="UniProtKB-UniRule"/>
</dbReference>
<dbReference type="GO" id="GO:0019083">
    <property type="term" value="P:viral transcription"/>
    <property type="evidence" value="ECO:0007669"/>
    <property type="project" value="UniProtKB-KW"/>
</dbReference>
<dbReference type="Gene3D" id="6.10.140.720">
    <property type="match status" value="1"/>
</dbReference>
<dbReference type="HAMAP" id="MF_04065">
    <property type="entry name" value="INFV_RDRP"/>
    <property type="match status" value="1"/>
</dbReference>
<dbReference type="InterPro" id="IPR007099">
    <property type="entry name" value="RNA-dir_pol_NSvirus"/>
</dbReference>
<dbReference type="InterPro" id="IPR001407">
    <property type="entry name" value="RNA_pol_PB1_influenza"/>
</dbReference>
<dbReference type="Pfam" id="PF00602">
    <property type="entry name" value="Flu_PB1"/>
    <property type="match status" value="1"/>
</dbReference>
<dbReference type="PIRSF" id="PIRSF000827">
    <property type="entry name" value="RdRPol_OMV"/>
    <property type="match status" value="1"/>
</dbReference>
<dbReference type="PROSITE" id="PS50525">
    <property type="entry name" value="RDRP_SSRNA_NEG_SEG"/>
    <property type="match status" value="1"/>
</dbReference>
<accession>P13871</accession>
<organismHost>
    <name type="scientific">Homo sapiens</name>
    <name type="common">Human</name>
    <dbReference type="NCBI Taxonomy" id="9606"/>
</organismHost>
<reference key="1">
    <citation type="journal article" date="1988" name="Virology">
        <title>Sequence comparison of wild-type and cold-adapted B/Ann Arbor/1/66 influenza virus genes.</title>
        <authorList>
            <person name="Deborde D.C."/>
            <person name="Donabedian A.M."/>
            <person name="Herlocher M.L."/>
            <person name="Naeve C.W."/>
            <person name="Maassab H.F."/>
        </authorList>
    </citation>
    <scope>NUCLEOTIDE SEQUENCE [GENOMIC RNA]</scope>
</reference>
<organism>
    <name type="scientific">Influenza B virus (strain B/Ann Arbor/1/1966 [cold-adapted])</name>
    <dbReference type="NCBI Taxonomy" id="11522"/>
    <lineage>
        <taxon>Viruses</taxon>
        <taxon>Riboviria</taxon>
        <taxon>Orthornavirae</taxon>
        <taxon>Negarnaviricota</taxon>
        <taxon>Polyploviricotina</taxon>
        <taxon>Insthoviricetes</taxon>
        <taxon>Articulavirales</taxon>
        <taxon>Orthomyxoviridae</taxon>
        <taxon>Betainfluenzavirus</taxon>
        <taxon>Betainfluenzavirus influenzae</taxon>
        <taxon>Influenza B virus</taxon>
    </lineage>
</organism>
<name>RDRP_INBAC</name>
<gene>
    <name evidence="1" type="primary">PB1</name>
</gene>
<proteinExistence type="inferred from homology"/>
<evidence type="ECO:0000255" key="1">
    <source>
        <dbReference type="HAMAP-Rule" id="MF_04065"/>
    </source>
</evidence>
<sequence>MNINPYFLFIDVPIQAAISTTFPYTGVPPYSHGTGTGYTIDTVIRTHEYSNKGKQYISDVTGCAMVDPTNGPLPEDNEPSAYAQLDCVLEALDRMDEEHPGLFQAASQNAMEALMVTTVDKLTQGRQTFDWTVCRNQPAATALNTTITSFRLNDLNGADKGGLVPFCQDIIDSLDKPEMTFFSVKNIKKKLPAKNRKGFLIKRIPMKVKDRITRVEYIKRALSLNTMTKDAERGKLKRRAIATAGIQIRGFVLVVENLAKNICENLEQSGLPVGGNEKKAKLSNAVAKMLSNCPPGGISMTVTGDNTKWNECLNPRIFLAMTERITRDSPIWFRDFCSIAPVLFSNKIARLGKGFMITSKTKRLKAQIPCPDLFNIPLERYNEETRAKLKKLKPFFNEEGTASLSPGMMMGMFNMLSTVLGVAALGIKNIGNKEYLWDGLQSSDDFALFVNAKDEETCMEGINDFYRTCKLLGINMSKKKSYCNETGMFEFTSMFYRDGFVSNFAMELPSFGVAGVNESADMAIGMTIIKNNMINNGMGPATAQTAIQLFIADYRYTYKCHRGDSKVEGKRMKIIKELWENTKGRDGLLVADGGPNIYNLRNLHIPEIVLKYNLMDPEYKGRLLHPQNPFVGHLSIEGIKEADITPAHGPVKKMDYDAVSGTHSWRTKRNRSILNTDQRNMILEEQCYAKCCNLFEACFNSASYRKPVGQHSMLEAMAHRLRMDARLDYESGRMSKDDFEKAMAHLGEIGYI</sequence>
<keyword id="KW-1262">Eukaryotic host gene expression shutoff by virus</keyword>
<keyword id="KW-1191">Eukaryotic host transcription shutoff by virus</keyword>
<keyword id="KW-1035">Host cytoplasm</keyword>
<keyword id="KW-1190">Host gene expression shutoff by virus</keyword>
<keyword id="KW-1048">Host nucleus</keyword>
<keyword id="KW-0945">Host-virus interaction</keyword>
<keyword id="KW-1104">Inhibition of host RNA polymerase II by virus</keyword>
<keyword id="KW-0547">Nucleotide-binding</keyword>
<keyword id="KW-0548">Nucleotidyltransferase</keyword>
<keyword id="KW-0597">Phosphoprotein</keyword>
<keyword id="KW-0696">RNA-directed RNA polymerase</keyword>
<keyword id="KW-0808">Transferase</keyword>
<keyword id="KW-0693">Viral RNA replication</keyword>
<keyword id="KW-1195">Viral transcription</keyword>
<feature type="chain" id="PRO_0000078772" description="RNA-directed RNA polymerase catalytic subunit">
    <location>
        <begin position="1"/>
        <end position="752"/>
    </location>
</feature>
<feature type="domain" description="RdRp catalytic" evidence="1">
    <location>
        <begin position="286"/>
        <end position="482"/>
    </location>
</feature>
<feature type="region of interest" description="Promoter-binding site" evidence="1">
    <location>
        <begin position="249"/>
        <end position="256"/>
    </location>
</feature>
<feature type="short sequence motif" description="Nuclear localization signal" evidence="1">
    <location>
        <begin position="187"/>
        <end position="195"/>
    </location>
</feature>
<feature type="short sequence motif" description="Nuclear localization signal" evidence="1">
    <location>
        <begin position="203"/>
        <end position="216"/>
    </location>
</feature>
<comment type="function">
    <text evidence="1">RNA-dependent RNA polymerase which is responsible for replication and transcription of virus RNA segments. The transcription of viral mRNAs occurs by a unique mechanism called cap-snatching. 5' methylated caps of cellular mRNAs are cleaved after 10-13 nucleotides by PA. In turn, these short capped RNAs are used as primers by PB1 for transcription of viral mRNAs. During virus replication, PB1 initiates RNA synthesis and copy vRNA into complementary RNA (cRNA) which in turn serves as a template for the production of more vRNAs.</text>
</comment>
<comment type="catalytic activity">
    <reaction evidence="1">
        <text>RNA(n) + a ribonucleoside 5'-triphosphate = RNA(n+1) + diphosphate</text>
        <dbReference type="Rhea" id="RHEA:21248"/>
        <dbReference type="Rhea" id="RHEA-COMP:14527"/>
        <dbReference type="Rhea" id="RHEA-COMP:17342"/>
        <dbReference type="ChEBI" id="CHEBI:33019"/>
        <dbReference type="ChEBI" id="CHEBI:61557"/>
        <dbReference type="ChEBI" id="CHEBI:140395"/>
        <dbReference type="EC" id="2.7.7.48"/>
    </reaction>
</comment>
<comment type="subunit">
    <text evidence="1">Influenza RNA polymerase is composed of three subunits: PB1, PB2 and PA. Interacts (via N-terminus) with PA (via C-terminus). Interacts (via C-terminus) with PB2 (via N-terminus); this interaction is essential for transcription initiation.</text>
</comment>
<comment type="subcellular location">
    <subcellularLocation>
        <location evidence="1">Host nucleus</location>
    </subcellularLocation>
    <subcellularLocation>
        <location evidence="1">Host cytoplasm</location>
    </subcellularLocation>
</comment>
<comment type="PTM">
    <text evidence="1">Phosphorylated by host PRKCA.</text>
</comment>
<comment type="similarity">
    <text evidence="1">Belongs to the influenza viruses polymerase PB1 family.</text>
</comment>